<keyword id="KW-0488">Methylation</keyword>
<keyword id="KW-0687">Ribonucleoprotein</keyword>
<keyword id="KW-0689">Ribosomal protein</keyword>
<keyword id="KW-0694">RNA-binding</keyword>
<keyword id="KW-0699">rRNA-binding</keyword>
<name>RL3_BRUA1</name>
<protein>
    <recommendedName>
        <fullName evidence="1">Large ribosomal subunit protein uL3</fullName>
    </recommendedName>
    <alternativeName>
        <fullName evidence="3">50S ribosomal protein L3</fullName>
    </alternativeName>
</protein>
<feature type="chain" id="PRO_1000141833" description="Large ribosomal subunit protein uL3">
    <location>
        <begin position="1"/>
        <end position="237"/>
    </location>
</feature>
<feature type="region of interest" description="Disordered" evidence="2">
    <location>
        <begin position="133"/>
        <end position="155"/>
    </location>
</feature>
<feature type="region of interest" description="Disordered" evidence="2">
    <location>
        <begin position="213"/>
        <end position="237"/>
    </location>
</feature>
<feature type="compositionally biased region" description="Polar residues" evidence="2">
    <location>
        <begin position="135"/>
        <end position="150"/>
    </location>
</feature>
<feature type="compositionally biased region" description="Low complexity" evidence="2">
    <location>
        <begin position="220"/>
        <end position="237"/>
    </location>
</feature>
<feature type="modified residue" description="N5-methylglutamine" evidence="1">
    <location>
        <position position="151"/>
    </location>
</feature>
<dbReference type="EMBL" id="CP000887">
    <property type="protein sequence ID" value="ACD72676.1"/>
    <property type="molecule type" value="Genomic_DNA"/>
</dbReference>
<dbReference type="RefSeq" id="WP_002964362.1">
    <property type="nucleotide sequence ID" value="NC_010742.1"/>
</dbReference>
<dbReference type="SMR" id="B2S679"/>
<dbReference type="GeneID" id="93016439"/>
<dbReference type="KEGG" id="bmc:BAbS19_I11710"/>
<dbReference type="HOGENOM" id="CLU_044142_2_0_5"/>
<dbReference type="Proteomes" id="UP000002565">
    <property type="component" value="Chromosome 1"/>
</dbReference>
<dbReference type="GO" id="GO:0022625">
    <property type="term" value="C:cytosolic large ribosomal subunit"/>
    <property type="evidence" value="ECO:0007669"/>
    <property type="project" value="TreeGrafter"/>
</dbReference>
<dbReference type="GO" id="GO:0019843">
    <property type="term" value="F:rRNA binding"/>
    <property type="evidence" value="ECO:0007669"/>
    <property type="project" value="UniProtKB-UniRule"/>
</dbReference>
<dbReference type="GO" id="GO:0003735">
    <property type="term" value="F:structural constituent of ribosome"/>
    <property type="evidence" value="ECO:0007669"/>
    <property type="project" value="InterPro"/>
</dbReference>
<dbReference type="GO" id="GO:0006412">
    <property type="term" value="P:translation"/>
    <property type="evidence" value="ECO:0007669"/>
    <property type="project" value="UniProtKB-UniRule"/>
</dbReference>
<dbReference type="FunFam" id="2.40.30.10:FF:000004">
    <property type="entry name" value="50S ribosomal protein L3"/>
    <property type="match status" value="1"/>
</dbReference>
<dbReference type="FunFam" id="3.30.160.810:FF:000001">
    <property type="entry name" value="50S ribosomal protein L3"/>
    <property type="match status" value="1"/>
</dbReference>
<dbReference type="Gene3D" id="3.30.160.810">
    <property type="match status" value="1"/>
</dbReference>
<dbReference type="Gene3D" id="2.40.30.10">
    <property type="entry name" value="Translation factors"/>
    <property type="match status" value="1"/>
</dbReference>
<dbReference type="HAMAP" id="MF_01325_B">
    <property type="entry name" value="Ribosomal_uL3_B"/>
    <property type="match status" value="1"/>
</dbReference>
<dbReference type="InterPro" id="IPR000597">
    <property type="entry name" value="Ribosomal_uL3"/>
</dbReference>
<dbReference type="InterPro" id="IPR019927">
    <property type="entry name" value="Ribosomal_uL3_bac/org-type"/>
</dbReference>
<dbReference type="InterPro" id="IPR019926">
    <property type="entry name" value="Ribosomal_uL3_CS"/>
</dbReference>
<dbReference type="InterPro" id="IPR009000">
    <property type="entry name" value="Transl_B-barrel_sf"/>
</dbReference>
<dbReference type="NCBIfam" id="TIGR03625">
    <property type="entry name" value="L3_bact"/>
    <property type="match status" value="1"/>
</dbReference>
<dbReference type="PANTHER" id="PTHR11229">
    <property type="entry name" value="50S RIBOSOMAL PROTEIN L3"/>
    <property type="match status" value="1"/>
</dbReference>
<dbReference type="PANTHER" id="PTHR11229:SF16">
    <property type="entry name" value="LARGE RIBOSOMAL SUBUNIT PROTEIN UL3C"/>
    <property type="match status" value="1"/>
</dbReference>
<dbReference type="Pfam" id="PF00297">
    <property type="entry name" value="Ribosomal_L3"/>
    <property type="match status" value="1"/>
</dbReference>
<dbReference type="SUPFAM" id="SSF50447">
    <property type="entry name" value="Translation proteins"/>
    <property type="match status" value="1"/>
</dbReference>
<dbReference type="PROSITE" id="PS00474">
    <property type="entry name" value="RIBOSOMAL_L3"/>
    <property type="match status" value="1"/>
</dbReference>
<accession>B2S679</accession>
<reference key="1">
    <citation type="journal article" date="2008" name="PLoS ONE">
        <title>Genome sequence of Brucella abortus vaccine strain S19 compared to virulent strains yields candidate virulence genes.</title>
        <authorList>
            <person name="Crasta O.R."/>
            <person name="Folkerts O."/>
            <person name="Fei Z."/>
            <person name="Mane S.P."/>
            <person name="Evans C."/>
            <person name="Martino-Catt S."/>
            <person name="Bricker B."/>
            <person name="Yu G."/>
            <person name="Du L."/>
            <person name="Sobral B.W."/>
        </authorList>
    </citation>
    <scope>NUCLEOTIDE SEQUENCE [LARGE SCALE GENOMIC DNA]</scope>
    <source>
        <strain>S19</strain>
    </source>
</reference>
<sequence length="237" mass="25064">MRSGVIAQKLGMTRVYNDAGEHVPVTVLRMENCHVVAQRTVEKNGYTAVQLGVGMAKVKNTSKAMRGHFAKAEVEPKAKLAEFRVSPDNLLEVGVEITAEHFVAGQKVDVTGTSIGKGFAGVMKRHNFGGHRASHGNSITHRSHGSTGQRQDPGKVFKGKKMAGHMGQTRVTTQNIEVVSTDSDRGLILVRGAVPGSKGAWILVRDAVKASLPENAPKPAGLRAGAKAEAAATEGGE</sequence>
<comment type="function">
    <text evidence="1">One of the primary rRNA binding proteins, it binds directly near the 3'-end of the 23S rRNA, where it nucleates assembly of the 50S subunit.</text>
</comment>
<comment type="subunit">
    <text evidence="1">Part of the 50S ribosomal subunit. Forms a cluster with proteins L14 and L19.</text>
</comment>
<comment type="PTM">
    <text evidence="1">Methylated by PrmB.</text>
</comment>
<comment type="similarity">
    <text evidence="1">Belongs to the universal ribosomal protein uL3 family.</text>
</comment>
<proteinExistence type="inferred from homology"/>
<evidence type="ECO:0000255" key="1">
    <source>
        <dbReference type="HAMAP-Rule" id="MF_01325"/>
    </source>
</evidence>
<evidence type="ECO:0000256" key="2">
    <source>
        <dbReference type="SAM" id="MobiDB-lite"/>
    </source>
</evidence>
<evidence type="ECO:0000305" key="3"/>
<gene>
    <name evidence="1" type="primary">rplC</name>
    <name type="ordered locus">BAbS19_I11710</name>
</gene>
<organism>
    <name type="scientific">Brucella abortus (strain S19)</name>
    <dbReference type="NCBI Taxonomy" id="430066"/>
    <lineage>
        <taxon>Bacteria</taxon>
        <taxon>Pseudomonadati</taxon>
        <taxon>Pseudomonadota</taxon>
        <taxon>Alphaproteobacteria</taxon>
        <taxon>Hyphomicrobiales</taxon>
        <taxon>Brucellaceae</taxon>
        <taxon>Brucella/Ochrobactrum group</taxon>
        <taxon>Brucella</taxon>
    </lineage>
</organism>